<dbReference type="EMBL" id="BA000017">
    <property type="protein sequence ID" value="BAB57163.2"/>
    <property type="status" value="ALT_INIT"/>
    <property type="molecule type" value="Genomic_DNA"/>
</dbReference>
<dbReference type="EMBL" id="AJ564070">
    <property type="protein sequence ID" value="CAD91854.1"/>
    <property type="molecule type" value="Genomic_DNA"/>
</dbReference>
<dbReference type="SMR" id="Q931V3"/>
<dbReference type="KEGG" id="sav:SAV1001"/>
<dbReference type="HOGENOM" id="CLU_069785_0_0_9"/>
<dbReference type="Proteomes" id="UP000002481">
    <property type="component" value="Chromosome"/>
</dbReference>
<dbReference type="GO" id="GO:0005737">
    <property type="term" value="C:cytoplasm"/>
    <property type="evidence" value="ECO:0007669"/>
    <property type="project" value="UniProtKB-SubCell"/>
</dbReference>
<dbReference type="Gene3D" id="3.40.30.10">
    <property type="entry name" value="Glutaredoxin"/>
    <property type="match status" value="1"/>
</dbReference>
<dbReference type="HAMAP" id="MF_02245">
    <property type="entry name" value="Adapter_SpxH"/>
    <property type="match status" value="1"/>
</dbReference>
<dbReference type="InterPro" id="IPR046404">
    <property type="entry name" value="Adapter_SpxH"/>
</dbReference>
<dbReference type="InterPro" id="IPR036249">
    <property type="entry name" value="Thioredoxin-like_sf"/>
</dbReference>
<dbReference type="PANTHER" id="PTHR13887:SF47">
    <property type="entry name" value="CLPXP ADAPTER PROTEIN SPXH"/>
    <property type="match status" value="1"/>
</dbReference>
<dbReference type="PANTHER" id="PTHR13887">
    <property type="entry name" value="GLUTATHIONE S-TRANSFERASE KAPPA"/>
    <property type="match status" value="1"/>
</dbReference>
<dbReference type="Pfam" id="PF13743">
    <property type="entry name" value="Thioredoxin_5"/>
    <property type="match status" value="1"/>
</dbReference>
<dbReference type="SUPFAM" id="SSF52833">
    <property type="entry name" value="Thioredoxin-like"/>
    <property type="match status" value="1"/>
</dbReference>
<keyword id="KW-0963">Cytoplasm</keyword>
<protein>
    <recommendedName>
        <fullName evidence="1">ClpXP adapter protein SpxH</fullName>
    </recommendedName>
</protein>
<feature type="chain" id="PRO_0000278692" description="ClpXP adapter protein SpxH">
    <location>
        <begin position="1"/>
        <end position="268"/>
    </location>
</feature>
<gene>
    <name evidence="1" type="primary">spxH</name>
    <name type="ordered locus">SAV1001</name>
</gene>
<evidence type="ECO:0000255" key="1">
    <source>
        <dbReference type="HAMAP-Rule" id="MF_02245"/>
    </source>
</evidence>
<evidence type="ECO:0000305" key="2"/>
<sequence length="268" mass="31364">MAGELRIMENKSREDINLSPVSKIEIYSFFDPFSSDCFKLSAILSKLRIEYNQYIRIRHILNPSLKVLTKCQAQSTSNFDNIALAYKAAELQGRVRAERFIHLMQNEIIPKRDIITESMICDCIQNAGIDLEVFKDDLQKSKLTESLKIDLHIAREMEIEQAPSLVFFSEDVHEEGLKVEGLYPYHIYTYIINELMGKPIEKNLPPKLETYIQQQQLVTMEELLTIYEWPEKLLNKELKKLAIQQKIEKLKYPDGDFWKSKMPKIKSK</sequence>
<accession>Q931V3</accession>
<accession>Q7WRM0</accession>
<accession>Q7X225</accession>
<reference key="1">
    <citation type="journal article" date="2001" name="Lancet">
        <title>Whole genome sequencing of meticillin-resistant Staphylococcus aureus.</title>
        <authorList>
            <person name="Kuroda M."/>
            <person name="Ohta T."/>
            <person name="Uchiyama I."/>
            <person name="Baba T."/>
            <person name="Yuzawa H."/>
            <person name="Kobayashi I."/>
            <person name="Cui L."/>
            <person name="Oguchi A."/>
            <person name="Aoki K."/>
            <person name="Nagai Y."/>
            <person name="Lian J.-Q."/>
            <person name="Ito T."/>
            <person name="Kanamori M."/>
            <person name="Matsumaru H."/>
            <person name="Maruyama A."/>
            <person name="Murakami H."/>
            <person name="Hosoyama A."/>
            <person name="Mizutani-Ui Y."/>
            <person name="Takahashi N.K."/>
            <person name="Sawano T."/>
            <person name="Inoue R."/>
            <person name="Kaito C."/>
            <person name="Sekimizu K."/>
            <person name="Hirakawa H."/>
            <person name="Kuhara S."/>
            <person name="Goto S."/>
            <person name="Yabuzaki J."/>
            <person name="Kanehisa M."/>
            <person name="Yamashita A."/>
            <person name="Oshima K."/>
            <person name="Furuya K."/>
            <person name="Yoshino C."/>
            <person name="Shiba T."/>
            <person name="Hattori M."/>
            <person name="Ogasawara N."/>
            <person name="Hayashi H."/>
            <person name="Hiramatsu K."/>
        </authorList>
    </citation>
    <scope>NUCLEOTIDE SEQUENCE [LARGE SCALE GENOMIC DNA]</scope>
    <source>
        <strain>Mu50 / ATCC 700699</strain>
    </source>
</reference>
<reference key="2">
    <citation type="journal article" date="2004" name="J. Antimicrob. Chemother.">
        <title>Genetic analysis of 17 genes in Staphylococcus aureus with reduced susceptibility to vancomycin (VISA) and heteroVISA.</title>
        <authorList>
            <person name="Wootton M."/>
            <person name="Avison M.B."/>
            <person name="Bennett P.M."/>
            <person name="Howe R.A."/>
            <person name="MacGowan A.P."/>
            <person name="Walsh T.R."/>
        </authorList>
    </citation>
    <scope>NUCLEOTIDE SEQUENCE [GENOMIC DNA] OF 8-268</scope>
</reference>
<name>SPXH_STAAM</name>
<proteinExistence type="inferred from homology"/>
<organism>
    <name type="scientific">Staphylococcus aureus (strain Mu50 / ATCC 700699)</name>
    <dbReference type="NCBI Taxonomy" id="158878"/>
    <lineage>
        <taxon>Bacteria</taxon>
        <taxon>Bacillati</taxon>
        <taxon>Bacillota</taxon>
        <taxon>Bacilli</taxon>
        <taxon>Bacillales</taxon>
        <taxon>Staphylococcaceae</taxon>
        <taxon>Staphylococcus</taxon>
    </lineage>
</organism>
<comment type="function">
    <text evidence="1">Adapter protein required for efficient degradation of Spx by ClpXP under non-stress conditions. Interaction with Spx stabilizes Spx and exposes the C-terminus of Spx for recognition and proteolysis by ClpXP.</text>
</comment>
<comment type="subunit">
    <text evidence="1">Interacts with Spx.</text>
</comment>
<comment type="subcellular location">
    <subcellularLocation>
        <location evidence="1">Cytoplasm</location>
    </subcellularLocation>
</comment>
<comment type="similarity">
    <text evidence="1">Belongs to the SpxH family.</text>
</comment>
<comment type="sequence caution" evidence="2">
    <conflict type="erroneous initiation">
        <sequence resource="EMBL-CDS" id="BAB57163"/>
    </conflict>
</comment>